<feature type="chain" id="PRO_0000205152" description="SED5-binding protein 3">
    <location>
        <begin position="1"/>
        <end position="929"/>
    </location>
</feature>
<feature type="region of interest" description="Disordered" evidence="2">
    <location>
        <begin position="18"/>
        <end position="52"/>
    </location>
</feature>
<feature type="region of interest" description="Zinc finger-like">
    <location>
        <begin position="220"/>
        <end position="244"/>
    </location>
</feature>
<feature type="compositionally biased region" description="Polar residues" evidence="2">
    <location>
        <begin position="18"/>
        <end position="28"/>
    </location>
</feature>
<feature type="compositionally biased region" description="Basic residues" evidence="2">
    <location>
        <begin position="29"/>
        <end position="38"/>
    </location>
</feature>
<feature type="compositionally biased region" description="Polar residues" evidence="2">
    <location>
        <begin position="40"/>
        <end position="52"/>
    </location>
</feature>
<feature type="modified residue" description="Phosphoserine" evidence="7">
    <location>
        <position position="15"/>
    </location>
</feature>
<feature type="modified residue" description="Phosphothreonine" evidence="8">
    <location>
        <position position="72"/>
    </location>
</feature>
<feature type="modified residue" description="Phosphoserine" evidence="8">
    <location>
        <position position="83"/>
    </location>
</feature>
<feature type="modified residue" description="Phosphoserine" evidence="8">
    <location>
        <position position="85"/>
    </location>
</feature>
<feature type="modified residue" description="Phosphoserine" evidence="7">
    <location>
        <position position="94"/>
    </location>
</feature>
<feature type="modified residue" description="Phosphoserine" evidence="6 7 8">
    <location>
        <position position="101"/>
    </location>
</feature>
<feature type="modified residue" description="Phosphoserine" evidence="8">
    <location>
        <position position="110"/>
    </location>
</feature>
<feature type="modified residue" description="Phosphothreonine" evidence="7">
    <location>
        <position position="216"/>
    </location>
</feature>
<evidence type="ECO:0000250" key="1"/>
<evidence type="ECO:0000256" key="2">
    <source>
        <dbReference type="SAM" id="MobiDB-lite"/>
    </source>
</evidence>
<evidence type="ECO:0000269" key="3">
    <source>
    </source>
</evidence>
<evidence type="ECO:0000269" key="4">
    <source>
    </source>
</evidence>
<evidence type="ECO:0000305" key="5"/>
<evidence type="ECO:0007744" key="6">
    <source>
    </source>
</evidence>
<evidence type="ECO:0007744" key="7">
    <source>
    </source>
</evidence>
<evidence type="ECO:0007744" key="8">
    <source>
    </source>
</evidence>
<sequence length="929" mass="103950">MSQQNILAASVSALSLDESTVHTGGASSKKSRRPHRAYHNFSSGTVPTLGNSPYTTPQLNQQDGFQQPQAFTPKQFGGFNNGSGSVMSTPVMVSQERFGASEASSPYGQSMLDMTAPQPTSHIVPTQRFEDQAQYLQRSFETCRDSVPPLPTTQFYCVDQGSCDPHLMSLSMYNIPESEHLRAATKLPLGLTIQPFSTLTPNDAEVPTIPLPMDGTPLRCRRCRAYANPKFQFTYDSSVICNICRVKMQVPGEHFAPMGPNGQRSDLNEKSELLHGTVDFLVPSIYNAIQEKELLPLHYVFLIDVSLLANENGSSLAMVEGVRSCIEYISDFQPNCEVAIIVYDNKLRFFNLRPDLDNAQEYIVSELDDVFLPFYNGLFVKPGNSMKIINDTLIKISGYISTDKYSHVPQVCYGSALQAAKLALDTVTGGQGGKIICSLNSLPTIGNGNLSLKRDNAHIAHVKCDNGFYKKLASDFLKSYISLDLYVTNAGFIDMATVGHPVEMTSGILKYYPHFQQETDAFTLVNDMVTNVSNIVGYQALLKVRCSTGLSVEQYYCDSSDNTDHDPIIPVLTRDTTLDVLLKYDSKIKTGTDVHFQTALLYTDIDGVRKVRSINTSGAVSNNIREIFKFINQNPVMRIMIKDVIKTLGDCDFVKIRRLIDDKMVEILTQYRGLVSSNSSTQLILPDSIKTLPAYMLAFEKSELMKPNAQSTRGNERIYDLLKYDSLNSAQLCYKLYPQIVPFHVLLEETDLTFYDANDKLLQINSSSINNLSVRASHSNFINGGCYLIFQGDTIYLWFNENTNRMLLQDLLSVDESLPVSQISLFSGTLPETGTSINQKASNVIKNWQQVVNKSSLPLVLLRPNVDQYYSNVMSQLLCEDKTVNRIESYDNYLVIMHKKIQEKLQKDDFIKVSTAATHENIHQKFVQF</sequence>
<dbReference type="EMBL" id="U00060">
    <property type="protein sequence ID" value="AAB68936.1"/>
    <property type="molecule type" value="Genomic_DNA"/>
</dbReference>
<dbReference type="EMBL" id="AJ009784">
    <property type="protein sequence ID" value="CAA08831.1"/>
    <property type="molecule type" value="Genomic_DNA"/>
</dbReference>
<dbReference type="EMBL" id="BK006934">
    <property type="protein sequence ID" value="DAA06792.1"/>
    <property type="molecule type" value="Genomic_DNA"/>
</dbReference>
<dbReference type="PIR" id="S46728">
    <property type="entry name" value="S46728"/>
</dbReference>
<dbReference type="RefSeq" id="NP_011966.1">
    <property type="nucleotide sequence ID" value="NM_001179228.1"/>
</dbReference>
<dbReference type="SMR" id="P38810"/>
<dbReference type="BioGRID" id="36531">
    <property type="interactions" value="401"/>
</dbReference>
<dbReference type="ComplexPortal" id="CPX-1341">
    <property type="entry name" value="SEC23-LST1 COPII cargo recruitment complex"/>
</dbReference>
<dbReference type="DIP" id="DIP-2949N"/>
<dbReference type="FunCoup" id="P38810">
    <property type="interactions" value="206"/>
</dbReference>
<dbReference type="IntAct" id="P38810">
    <property type="interactions" value="14"/>
</dbReference>
<dbReference type="MINT" id="P38810"/>
<dbReference type="STRING" id="4932.YHR098C"/>
<dbReference type="iPTMnet" id="P38810"/>
<dbReference type="PaxDb" id="4932-YHR098C"/>
<dbReference type="PeptideAtlas" id="P38810"/>
<dbReference type="EnsemblFungi" id="YHR098C_mRNA">
    <property type="protein sequence ID" value="YHR098C"/>
    <property type="gene ID" value="YHR098C"/>
</dbReference>
<dbReference type="GeneID" id="856498"/>
<dbReference type="KEGG" id="sce:YHR098C"/>
<dbReference type="AGR" id="SGD:S000001140"/>
<dbReference type="SGD" id="S000001140">
    <property type="gene designation" value="SFB3"/>
</dbReference>
<dbReference type="VEuPathDB" id="FungiDB:YHR098C"/>
<dbReference type="eggNOG" id="KOG1984">
    <property type="taxonomic scope" value="Eukaryota"/>
</dbReference>
<dbReference type="GeneTree" id="ENSGT00950000182924"/>
<dbReference type="HOGENOM" id="CLU_004589_1_0_1"/>
<dbReference type="InParanoid" id="P38810"/>
<dbReference type="OMA" id="INPFMTF"/>
<dbReference type="OrthoDB" id="49016at2759"/>
<dbReference type="BioCyc" id="YEAST:G3O-31143-MONOMER"/>
<dbReference type="Reactome" id="R-SCE-204005">
    <property type="pathway name" value="COPII-mediated vesicle transport"/>
</dbReference>
<dbReference type="Reactome" id="R-SCE-5694530">
    <property type="pathway name" value="Cargo concentration in the ER"/>
</dbReference>
<dbReference type="Reactome" id="R-SCE-983170">
    <property type="pathway name" value="Antigen Presentation: Folding, assembly and peptide loading of class I MHC"/>
</dbReference>
<dbReference type="BioGRID-ORCS" id="856498">
    <property type="hits" value="0 hits in 10 CRISPR screens"/>
</dbReference>
<dbReference type="PRO" id="PR:P38810"/>
<dbReference type="Proteomes" id="UP000002311">
    <property type="component" value="Chromosome VIII"/>
</dbReference>
<dbReference type="RNAct" id="P38810">
    <property type="molecule type" value="protein"/>
</dbReference>
<dbReference type="GO" id="GO:0071944">
    <property type="term" value="C:cell periphery"/>
    <property type="evidence" value="ECO:0007005"/>
    <property type="project" value="SGD"/>
</dbReference>
<dbReference type="GO" id="GO:0030127">
    <property type="term" value="C:COPII vesicle coat"/>
    <property type="evidence" value="ECO:0000314"/>
    <property type="project" value="ComplexPortal"/>
</dbReference>
<dbReference type="GO" id="GO:0005783">
    <property type="term" value="C:endoplasmic reticulum"/>
    <property type="evidence" value="ECO:0007005"/>
    <property type="project" value="SGD"/>
</dbReference>
<dbReference type="GO" id="GO:0070971">
    <property type="term" value="C:endoplasmic reticulum exit site"/>
    <property type="evidence" value="ECO:0000318"/>
    <property type="project" value="GO_Central"/>
</dbReference>
<dbReference type="GO" id="GO:0005789">
    <property type="term" value="C:endoplasmic reticulum membrane"/>
    <property type="evidence" value="ECO:0007669"/>
    <property type="project" value="UniProtKB-SubCell"/>
</dbReference>
<dbReference type="GO" id="GO:0000139">
    <property type="term" value="C:Golgi membrane"/>
    <property type="evidence" value="ECO:0007669"/>
    <property type="project" value="UniProtKB-SubCell"/>
</dbReference>
<dbReference type="GO" id="GO:0043332">
    <property type="term" value="C:mating projection tip"/>
    <property type="evidence" value="ECO:0007005"/>
    <property type="project" value="SGD"/>
</dbReference>
<dbReference type="GO" id="GO:0005048">
    <property type="term" value="F:signal sequence binding"/>
    <property type="evidence" value="ECO:0000250"/>
    <property type="project" value="SGD"/>
</dbReference>
<dbReference type="GO" id="GO:0000149">
    <property type="term" value="F:SNARE binding"/>
    <property type="evidence" value="ECO:0000318"/>
    <property type="project" value="GO_Central"/>
</dbReference>
<dbReference type="GO" id="GO:0008270">
    <property type="term" value="F:zinc ion binding"/>
    <property type="evidence" value="ECO:0000318"/>
    <property type="project" value="GO_Central"/>
</dbReference>
<dbReference type="GO" id="GO:0090110">
    <property type="term" value="P:COPII-coated vesicle cargo loading"/>
    <property type="evidence" value="ECO:0000314"/>
    <property type="project" value="ComplexPortal"/>
</dbReference>
<dbReference type="GO" id="GO:0006886">
    <property type="term" value="P:intracellular protein transport"/>
    <property type="evidence" value="ECO:0000314"/>
    <property type="project" value="ComplexPortal"/>
</dbReference>
<dbReference type="CDD" id="cd01479">
    <property type="entry name" value="Sec24-like"/>
    <property type="match status" value="1"/>
</dbReference>
<dbReference type="FunFam" id="3.40.20.10:FF:000069">
    <property type="entry name" value="Sfb3p"/>
    <property type="match status" value="1"/>
</dbReference>
<dbReference type="FunFam" id="3.40.50.410:FF:000108">
    <property type="entry name" value="Sfb3p"/>
    <property type="match status" value="1"/>
</dbReference>
<dbReference type="Gene3D" id="2.60.40.1670">
    <property type="entry name" value="beta-sandwich domain of Sec23/24"/>
    <property type="match status" value="1"/>
</dbReference>
<dbReference type="Gene3D" id="1.20.120.730">
    <property type="entry name" value="Sec23/Sec24 helical domain"/>
    <property type="match status" value="1"/>
</dbReference>
<dbReference type="Gene3D" id="3.40.20.10">
    <property type="entry name" value="Severin"/>
    <property type="match status" value="1"/>
</dbReference>
<dbReference type="Gene3D" id="3.40.50.410">
    <property type="entry name" value="von Willebrand factor, type A domain"/>
    <property type="match status" value="1"/>
</dbReference>
<dbReference type="Gene3D" id="2.30.30.380">
    <property type="entry name" value="Zn-finger domain of Sec23/24"/>
    <property type="match status" value="1"/>
</dbReference>
<dbReference type="InterPro" id="IPR029006">
    <property type="entry name" value="ADF-H/Gelsolin-like_dom_sf"/>
</dbReference>
<dbReference type="InterPro" id="IPR007123">
    <property type="entry name" value="Gelsolin-like_dom"/>
</dbReference>
<dbReference type="InterPro" id="IPR036180">
    <property type="entry name" value="Gelsolin-like_dom_sf"/>
</dbReference>
<dbReference type="InterPro" id="IPR006900">
    <property type="entry name" value="Sec23/24_helical_dom"/>
</dbReference>
<dbReference type="InterPro" id="IPR036175">
    <property type="entry name" value="Sec23/24_helical_dom_sf"/>
</dbReference>
<dbReference type="InterPro" id="IPR006896">
    <property type="entry name" value="Sec23/24_trunk_dom"/>
</dbReference>
<dbReference type="InterPro" id="IPR012990">
    <property type="entry name" value="Sec23_24_beta_S"/>
</dbReference>
<dbReference type="InterPro" id="IPR050550">
    <property type="entry name" value="SEC23_SEC24_subfamily"/>
</dbReference>
<dbReference type="InterPro" id="IPR041742">
    <property type="entry name" value="Sec24-like_trunk_dom"/>
</dbReference>
<dbReference type="InterPro" id="IPR036465">
    <property type="entry name" value="vWFA_dom_sf"/>
</dbReference>
<dbReference type="InterPro" id="IPR006895">
    <property type="entry name" value="Znf_Sec23_Sec24"/>
</dbReference>
<dbReference type="InterPro" id="IPR036174">
    <property type="entry name" value="Znf_Sec23_Sec24_sf"/>
</dbReference>
<dbReference type="PANTHER" id="PTHR13803">
    <property type="entry name" value="SEC24-RELATED PROTEIN"/>
    <property type="match status" value="1"/>
</dbReference>
<dbReference type="PANTHER" id="PTHR13803:SF4">
    <property type="entry name" value="SECRETORY 24CD, ISOFORM C"/>
    <property type="match status" value="1"/>
</dbReference>
<dbReference type="Pfam" id="PF00626">
    <property type="entry name" value="Gelsolin"/>
    <property type="match status" value="1"/>
</dbReference>
<dbReference type="Pfam" id="PF08033">
    <property type="entry name" value="Sec23_BS"/>
    <property type="match status" value="1"/>
</dbReference>
<dbReference type="Pfam" id="PF04815">
    <property type="entry name" value="Sec23_helical"/>
    <property type="match status" value="1"/>
</dbReference>
<dbReference type="Pfam" id="PF04811">
    <property type="entry name" value="Sec23_trunk"/>
    <property type="match status" value="1"/>
</dbReference>
<dbReference type="Pfam" id="PF04810">
    <property type="entry name" value="zf-Sec23_Sec24"/>
    <property type="match status" value="1"/>
</dbReference>
<dbReference type="SUPFAM" id="SSF81995">
    <property type="entry name" value="beta-sandwich domain of Sec23/24"/>
    <property type="match status" value="1"/>
</dbReference>
<dbReference type="SUPFAM" id="SSF82754">
    <property type="entry name" value="C-terminal, gelsolin-like domain of Sec23/24"/>
    <property type="match status" value="1"/>
</dbReference>
<dbReference type="SUPFAM" id="SSF81811">
    <property type="entry name" value="Helical domain of Sec23/24"/>
    <property type="match status" value="1"/>
</dbReference>
<dbReference type="SUPFAM" id="SSF53300">
    <property type="entry name" value="vWA-like"/>
    <property type="match status" value="1"/>
</dbReference>
<dbReference type="SUPFAM" id="SSF82919">
    <property type="entry name" value="Zn-finger domain of Sec23/24"/>
    <property type="match status" value="1"/>
</dbReference>
<comment type="function">
    <text>Component of the COPII coat, that covers ER-derived vesicles involved in transport from the endoplasmic reticulum to the Golgi apparatus. COPII acts in the cytoplasm to promote the transport of secretory, plasma membrane, and vacuolar proteins from the endoplasmic reticulum to the Golgi complex.</text>
</comment>
<comment type="subunit">
    <text evidence="4">COPII is composed of at least five proteins: the SEC23/24 complex, the SEC13/31 complex and SAR1. Binds to SED5. Interacts with GHR1.</text>
</comment>
<comment type="interaction">
    <interactant intactId="EBI-17012">
        <id>P38810</id>
    </interactant>
    <interactant intactId="EBI-16584">
        <id>P15303</id>
        <label>SEC23</label>
    </interactant>
    <organismsDiffer>false</organismsDiffer>
    <experiments>3</experiments>
</comment>
<comment type="subcellular location">
    <subcellularLocation>
        <location evidence="1">Cytoplasm</location>
    </subcellularLocation>
    <subcellularLocation>
        <location evidence="1">Golgi apparatus membrane</location>
    </subcellularLocation>
    <subcellularLocation>
        <location evidence="1">Endoplasmic reticulum membrane</location>
    </subcellularLocation>
</comment>
<comment type="miscellaneous">
    <text evidence="3">Present with 12200 molecules/cell in log phase SD medium.</text>
</comment>
<comment type="similarity">
    <text evidence="5">Belongs to the SEC23/SEC24 family. SEC24 subfamily.</text>
</comment>
<keyword id="KW-0963">Cytoplasm</keyword>
<keyword id="KW-0256">Endoplasmic reticulum</keyword>
<keyword id="KW-0931">ER-Golgi transport</keyword>
<keyword id="KW-0333">Golgi apparatus</keyword>
<keyword id="KW-0472">Membrane</keyword>
<keyword id="KW-0597">Phosphoprotein</keyword>
<keyword id="KW-0653">Protein transport</keyword>
<keyword id="KW-1185">Reference proteome</keyword>
<keyword id="KW-0813">Transport</keyword>
<accession>P38810</accession>
<accession>D3DL48</accession>
<protein>
    <recommendedName>
        <fullName>SED5-binding protein 3</fullName>
    </recommendedName>
    <alternativeName>
        <fullName>Lethal with SEC13 protein 1</fullName>
    </alternativeName>
    <alternativeName>
        <fullName>SEC24-related protein 3</fullName>
    </alternativeName>
</protein>
<proteinExistence type="evidence at protein level"/>
<gene>
    <name type="primary">SFB3</name>
    <name type="synonym">LST1</name>
    <name type="ordered locus">YHR098C</name>
</gene>
<organism>
    <name type="scientific">Saccharomyces cerevisiae (strain ATCC 204508 / S288c)</name>
    <name type="common">Baker's yeast</name>
    <dbReference type="NCBI Taxonomy" id="559292"/>
    <lineage>
        <taxon>Eukaryota</taxon>
        <taxon>Fungi</taxon>
        <taxon>Dikarya</taxon>
        <taxon>Ascomycota</taxon>
        <taxon>Saccharomycotina</taxon>
        <taxon>Saccharomycetes</taxon>
        <taxon>Saccharomycetales</taxon>
        <taxon>Saccharomycetaceae</taxon>
        <taxon>Saccharomyces</taxon>
    </lineage>
</organism>
<name>SFB3_YEAST</name>
<reference key="1">
    <citation type="journal article" date="1994" name="Science">
        <title>Complete nucleotide sequence of Saccharomyces cerevisiae chromosome VIII.</title>
        <authorList>
            <person name="Johnston M."/>
            <person name="Andrews S."/>
            <person name="Brinkman R."/>
            <person name="Cooper J."/>
            <person name="Ding H."/>
            <person name="Dover J."/>
            <person name="Du Z."/>
            <person name="Favello A."/>
            <person name="Fulton L."/>
            <person name="Gattung S."/>
            <person name="Geisel C."/>
            <person name="Kirsten J."/>
            <person name="Kucaba T."/>
            <person name="Hillier L.W."/>
            <person name="Jier M."/>
            <person name="Johnston L."/>
            <person name="Langston Y."/>
            <person name="Latreille P."/>
            <person name="Louis E.J."/>
            <person name="Macri C."/>
            <person name="Mardis E."/>
            <person name="Menezes S."/>
            <person name="Mouser L."/>
            <person name="Nhan M."/>
            <person name="Rifkin L."/>
            <person name="Riles L."/>
            <person name="St Peter H."/>
            <person name="Trevaskis E."/>
            <person name="Vaughan K."/>
            <person name="Vignati D."/>
            <person name="Wilcox L."/>
            <person name="Wohldman P."/>
            <person name="Waterston R."/>
            <person name="Wilson R."/>
            <person name="Vaudin M."/>
        </authorList>
    </citation>
    <scope>NUCLEOTIDE SEQUENCE [LARGE SCALE GENOMIC DNA]</scope>
    <source>
        <strain>ATCC 204508 / S288c</strain>
    </source>
</reference>
<reference key="2">
    <citation type="journal article" date="2014" name="G3 (Bethesda)">
        <title>The reference genome sequence of Saccharomyces cerevisiae: Then and now.</title>
        <authorList>
            <person name="Engel S.R."/>
            <person name="Dietrich F.S."/>
            <person name="Fisk D.G."/>
            <person name="Binkley G."/>
            <person name="Balakrishnan R."/>
            <person name="Costanzo M.C."/>
            <person name="Dwight S.S."/>
            <person name="Hitz B.C."/>
            <person name="Karra K."/>
            <person name="Nash R.S."/>
            <person name="Weng S."/>
            <person name="Wong E.D."/>
            <person name="Lloyd P."/>
            <person name="Skrzypek M.S."/>
            <person name="Miyasato S.R."/>
            <person name="Simison M."/>
            <person name="Cherry J.M."/>
        </authorList>
    </citation>
    <scope>GENOME REANNOTATION</scope>
    <source>
        <strain>ATCC 204508 / S288c</strain>
    </source>
</reference>
<reference key="3">
    <citation type="journal article" date="2000" name="J. Biol. Chem.">
        <title>Evidence for overlapping and distinct functions in protein transport of coat protein Sec24p family members.</title>
        <authorList>
            <person name="Peng R."/>
            <person name="De Antoni A."/>
            <person name="Gallwitz D."/>
        </authorList>
    </citation>
    <scope>NUCLEOTIDE SEQUENCE [GENOMIC DNA]</scope>
    <scope>CHARACTERIZATION</scope>
</reference>
<reference key="4">
    <citation type="journal article" date="1999" name="J. Cell Biol.">
        <title>LST1 is a SEC24 homologue used for selective export of the plasma membrane ATPase from the endoplasmic reticulum.</title>
        <authorList>
            <person name="Roberg K.J."/>
            <person name="Crotwell M."/>
            <person name="Espenshade P."/>
            <person name="Gimeno R."/>
            <person name="Kaiser C.A."/>
        </authorList>
    </citation>
    <scope>CHARACTERIZATION</scope>
</reference>
<reference key="5">
    <citation type="journal article" date="2003" name="Nature">
        <title>Global analysis of protein expression in yeast.</title>
        <authorList>
            <person name="Ghaemmaghami S."/>
            <person name="Huh W.-K."/>
            <person name="Bower K."/>
            <person name="Howson R.W."/>
            <person name="Belle A."/>
            <person name="Dephoure N."/>
            <person name="O'Shea E.K."/>
            <person name="Weissman J.S."/>
        </authorList>
    </citation>
    <scope>LEVEL OF PROTEIN EXPRESSION [LARGE SCALE ANALYSIS]</scope>
</reference>
<reference key="6">
    <citation type="journal article" date="2007" name="J. Cell Biol.">
        <title>The yeast orthologue of GRASP65 forms a complex with a coiled-coil protein that contributes to ER to Golgi traffic.</title>
        <authorList>
            <person name="Behnia R."/>
            <person name="Barr F.A."/>
            <person name="Flanagan J.J."/>
            <person name="Barlowe C."/>
            <person name="Munro S."/>
        </authorList>
    </citation>
    <scope>INTERACTION WITH GRH1</scope>
</reference>
<reference key="7">
    <citation type="journal article" date="2007" name="J. Proteome Res.">
        <title>Large-scale phosphorylation analysis of alpha-factor-arrested Saccharomyces cerevisiae.</title>
        <authorList>
            <person name="Li X."/>
            <person name="Gerber S.A."/>
            <person name="Rudner A.D."/>
            <person name="Beausoleil S.A."/>
            <person name="Haas W."/>
            <person name="Villen J."/>
            <person name="Elias J.E."/>
            <person name="Gygi S.P."/>
        </authorList>
    </citation>
    <scope>PHOSPHORYLATION [LARGE SCALE ANALYSIS] AT SER-101</scope>
    <scope>IDENTIFICATION BY MASS SPECTROMETRY [LARGE SCALE ANALYSIS]</scope>
    <source>
        <strain>ADR376</strain>
    </source>
</reference>
<reference key="8">
    <citation type="journal article" date="2008" name="Mol. Cell. Proteomics">
        <title>A multidimensional chromatography technology for in-depth phosphoproteome analysis.</title>
        <authorList>
            <person name="Albuquerque C.P."/>
            <person name="Smolka M.B."/>
            <person name="Payne S.H."/>
            <person name="Bafna V."/>
            <person name="Eng J."/>
            <person name="Zhou H."/>
        </authorList>
    </citation>
    <scope>PHOSPHORYLATION [LARGE SCALE ANALYSIS] AT SER-15; SER-94; SER-101 AND THR-216</scope>
    <scope>IDENTIFICATION BY MASS SPECTROMETRY [LARGE SCALE ANALYSIS]</scope>
</reference>
<reference key="9">
    <citation type="journal article" date="2009" name="Science">
        <title>Global analysis of Cdk1 substrate phosphorylation sites provides insights into evolution.</title>
        <authorList>
            <person name="Holt L.J."/>
            <person name="Tuch B.B."/>
            <person name="Villen J."/>
            <person name="Johnson A.D."/>
            <person name="Gygi S.P."/>
            <person name="Morgan D.O."/>
        </authorList>
    </citation>
    <scope>PHOSPHORYLATION [LARGE SCALE ANALYSIS] AT THR-72; SER-83; SER-85; SER-101 AND SER-110</scope>
    <scope>IDENTIFICATION BY MASS SPECTROMETRY [LARGE SCALE ANALYSIS]</scope>
</reference>